<evidence type="ECO:0000250" key="1"/>
<evidence type="ECO:0000255" key="2"/>
<evidence type="ECO:0000305" key="3"/>
<comment type="function">
    <text evidence="1">NDH shuttles electrons from NAD(P)H:plastoquinone, via FMN and iron-sulfur (Fe-S) centers, to quinones in the photosynthetic chain and possibly in a chloroplast respiratory chain. The immediate electron acceptor for the enzyme in this species is believed to be plastoquinone. Couples the redox reaction to proton translocation, and thus conserves the redox energy in a proton gradient (By similarity).</text>
</comment>
<comment type="catalytic activity">
    <reaction>
        <text>a plastoquinone + NADH + (n+1) H(+)(in) = a plastoquinol + NAD(+) + n H(+)(out)</text>
        <dbReference type="Rhea" id="RHEA:42608"/>
        <dbReference type="Rhea" id="RHEA-COMP:9561"/>
        <dbReference type="Rhea" id="RHEA-COMP:9562"/>
        <dbReference type="ChEBI" id="CHEBI:15378"/>
        <dbReference type="ChEBI" id="CHEBI:17757"/>
        <dbReference type="ChEBI" id="CHEBI:57540"/>
        <dbReference type="ChEBI" id="CHEBI:57945"/>
        <dbReference type="ChEBI" id="CHEBI:62192"/>
    </reaction>
</comment>
<comment type="catalytic activity">
    <reaction>
        <text>a plastoquinone + NADPH + (n+1) H(+)(in) = a plastoquinol + NADP(+) + n H(+)(out)</text>
        <dbReference type="Rhea" id="RHEA:42612"/>
        <dbReference type="Rhea" id="RHEA-COMP:9561"/>
        <dbReference type="Rhea" id="RHEA-COMP:9562"/>
        <dbReference type="ChEBI" id="CHEBI:15378"/>
        <dbReference type="ChEBI" id="CHEBI:17757"/>
        <dbReference type="ChEBI" id="CHEBI:57783"/>
        <dbReference type="ChEBI" id="CHEBI:58349"/>
        <dbReference type="ChEBI" id="CHEBI:62192"/>
    </reaction>
</comment>
<comment type="subunit">
    <text evidence="1">NDH is composed of at least 16 different subunits, 5 of which are encoded in the nucleus.</text>
</comment>
<comment type="subcellular location">
    <subcellularLocation>
        <location evidence="1">Plastid</location>
        <location evidence="1">Chloroplast thylakoid membrane</location>
        <topology evidence="1">Multi-pass membrane protein</topology>
    </subcellularLocation>
</comment>
<comment type="similarity">
    <text evidence="3">Belongs to the complex I subunit 6 family.</text>
</comment>
<sequence length="176" mass="19183">MDLPGLIHDFLLVFLGLGLILGGLGVVLLPNPIYSAFSLGLVFVCISLFYILSNSHFVAAAQLLIYVGAINVLIIFAVMFINGSEYSKDFHLWTVGDGITSVVCTSLFVSLITTIPDTSWYGIIWTTKANQIIEQDLISNSQQIGIHLSTDFFLPFEFISIILLVALIGAIAVARQ</sequence>
<dbReference type="EC" id="7.1.1.-"/>
<dbReference type="EMBL" id="DQ383816">
    <property type="protein sequence ID" value="ABD47285.1"/>
    <property type="molecule type" value="Genomic_DNA"/>
</dbReference>
<dbReference type="EMBL" id="AP007232">
    <property type="protein sequence ID" value="BAE47648.1"/>
    <property type="molecule type" value="Genomic_DNA"/>
</dbReference>
<dbReference type="RefSeq" id="YP_398381.1">
    <property type="nucleotide sequence ID" value="NC_007578.1"/>
</dbReference>
<dbReference type="SMR" id="Q332S4"/>
<dbReference type="GeneID" id="3772857"/>
<dbReference type="KEGG" id="lsv:3772857"/>
<dbReference type="OrthoDB" id="1893972at2759"/>
<dbReference type="GO" id="GO:0009535">
    <property type="term" value="C:chloroplast thylakoid membrane"/>
    <property type="evidence" value="ECO:0007669"/>
    <property type="project" value="UniProtKB-SubCell"/>
</dbReference>
<dbReference type="GO" id="GO:0008137">
    <property type="term" value="F:NADH dehydrogenase (ubiquinone) activity"/>
    <property type="evidence" value="ECO:0007669"/>
    <property type="project" value="InterPro"/>
</dbReference>
<dbReference type="GO" id="GO:0048038">
    <property type="term" value="F:quinone binding"/>
    <property type="evidence" value="ECO:0007669"/>
    <property type="project" value="UniProtKB-KW"/>
</dbReference>
<dbReference type="FunFam" id="1.20.120.1200:FF:000002">
    <property type="entry name" value="NAD(P)H-quinone oxidoreductase subunit 6, chloroplastic"/>
    <property type="match status" value="1"/>
</dbReference>
<dbReference type="Gene3D" id="1.20.120.1200">
    <property type="entry name" value="NADH-ubiquinone/plastoquinone oxidoreductase chain 6, subunit NuoJ"/>
    <property type="match status" value="1"/>
</dbReference>
<dbReference type="InterPro" id="IPR050290">
    <property type="entry name" value="NAD(P)H-Q_Oxidoreduct_6"/>
</dbReference>
<dbReference type="InterPro" id="IPR001457">
    <property type="entry name" value="NADH_UbQ/plastoQ_OxRdtase_su6"/>
</dbReference>
<dbReference type="InterPro" id="IPR042106">
    <property type="entry name" value="Nuo/plastoQ_OxRdtase_6_NuoJ"/>
</dbReference>
<dbReference type="PANTHER" id="PTHR48479">
    <property type="entry name" value="NAD(P)H-QUINONE OXIDOREDUCTASE SUBUNIT 6, CHLOROPLASTIC"/>
    <property type="match status" value="1"/>
</dbReference>
<dbReference type="PANTHER" id="PTHR48479:SF1">
    <property type="entry name" value="NAD(P)H-QUINONE OXIDOREDUCTASE SUBUNIT 6, CHLOROPLASTIC"/>
    <property type="match status" value="1"/>
</dbReference>
<dbReference type="Pfam" id="PF00499">
    <property type="entry name" value="Oxidored_q3"/>
    <property type="match status" value="1"/>
</dbReference>
<reference key="1">
    <citation type="journal article" date="2006" name="Transgenic Res.">
        <title>Efficient and stable transformation of Lactuca sativa L. cv. Cisco (lettuce) plastids.</title>
        <authorList>
            <person name="Kanamoto H."/>
            <person name="Yamashita A."/>
            <person name="Asao H."/>
            <person name="Okumura S."/>
            <person name="Takase H."/>
            <person name="Hattori M."/>
            <person name="Yokota A."/>
            <person name="Tomizawa K."/>
        </authorList>
    </citation>
    <scope>NUCLEOTIDE SEQUENCE [LARGE SCALE GENOMIC DNA]</scope>
    <source>
        <strain>cv. Cisco</strain>
    </source>
</reference>
<reference key="2">
    <citation type="submission" date="2006-01" db="EMBL/GenBank/DDBJ databases">
        <title>A comparison of the first two published chloroplast genomes in Asteraceae: Lactuca and Helianthus.</title>
        <authorList>
            <person name="Timme R.E."/>
            <person name="Kuehl J.V."/>
            <person name="Boore J.L."/>
            <person name="Jansen R.K."/>
        </authorList>
    </citation>
    <scope>NUCLEOTIDE SEQUENCE [LARGE SCALE GENOMIC DNA]</scope>
    <source>
        <strain>cv. Salinas</strain>
    </source>
</reference>
<gene>
    <name type="primary">ndhG</name>
</gene>
<feature type="chain" id="PRO_0000360262" description="NAD(P)H-quinone oxidoreductase subunit 6, chloroplastic">
    <location>
        <begin position="1"/>
        <end position="176"/>
    </location>
</feature>
<feature type="transmembrane region" description="Helical" evidence="2">
    <location>
        <begin position="10"/>
        <end position="30"/>
    </location>
</feature>
<feature type="transmembrane region" description="Helical" evidence="2">
    <location>
        <begin position="32"/>
        <end position="52"/>
    </location>
</feature>
<feature type="transmembrane region" description="Helical" evidence="2">
    <location>
        <begin position="61"/>
        <end position="81"/>
    </location>
</feature>
<feature type="transmembrane region" description="Helical" evidence="2">
    <location>
        <begin position="92"/>
        <end position="112"/>
    </location>
</feature>
<feature type="transmembrane region" description="Helical" evidence="2">
    <location>
        <begin position="152"/>
        <end position="172"/>
    </location>
</feature>
<keyword id="KW-0150">Chloroplast</keyword>
<keyword id="KW-0472">Membrane</keyword>
<keyword id="KW-0520">NAD</keyword>
<keyword id="KW-0521">NADP</keyword>
<keyword id="KW-0934">Plastid</keyword>
<keyword id="KW-0618">Plastoquinone</keyword>
<keyword id="KW-0874">Quinone</keyword>
<keyword id="KW-0793">Thylakoid</keyword>
<keyword id="KW-1278">Translocase</keyword>
<keyword id="KW-0812">Transmembrane</keyword>
<keyword id="KW-1133">Transmembrane helix</keyword>
<keyword id="KW-0813">Transport</keyword>
<organism>
    <name type="scientific">Lactuca sativa</name>
    <name type="common">Garden lettuce</name>
    <dbReference type="NCBI Taxonomy" id="4236"/>
    <lineage>
        <taxon>Eukaryota</taxon>
        <taxon>Viridiplantae</taxon>
        <taxon>Streptophyta</taxon>
        <taxon>Embryophyta</taxon>
        <taxon>Tracheophyta</taxon>
        <taxon>Spermatophyta</taxon>
        <taxon>Magnoliopsida</taxon>
        <taxon>eudicotyledons</taxon>
        <taxon>Gunneridae</taxon>
        <taxon>Pentapetalae</taxon>
        <taxon>asterids</taxon>
        <taxon>campanulids</taxon>
        <taxon>Asterales</taxon>
        <taxon>Asteraceae</taxon>
        <taxon>Cichorioideae</taxon>
        <taxon>Cichorieae</taxon>
        <taxon>Lactucinae</taxon>
        <taxon>Lactuca</taxon>
    </lineage>
</organism>
<accession>Q332S4</accession>
<geneLocation type="chloroplast"/>
<name>NU6C_LACSA</name>
<proteinExistence type="inferred from homology"/>
<protein>
    <recommendedName>
        <fullName>NAD(P)H-quinone oxidoreductase subunit 6, chloroplastic</fullName>
        <ecNumber>7.1.1.-</ecNumber>
    </recommendedName>
    <alternativeName>
        <fullName>NAD(P)H dehydrogenase subunit 6</fullName>
    </alternativeName>
    <alternativeName>
        <fullName>NADH-plastoquinone oxidoreductase subunit 6</fullName>
    </alternativeName>
</protein>